<protein>
    <recommendedName>
        <fullName evidence="1">ATP-dependent protease ATPase subunit HslU</fullName>
    </recommendedName>
    <alternativeName>
        <fullName evidence="1">Unfoldase HslU</fullName>
    </alternativeName>
</protein>
<evidence type="ECO:0000255" key="1">
    <source>
        <dbReference type="HAMAP-Rule" id="MF_00249"/>
    </source>
</evidence>
<reference key="1">
    <citation type="journal article" date="2006" name="J. Bacteriol.">
        <title>Pathogenomic sequence analysis of Bacillus cereus and Bacillus thuringiensis isolates closely related to Bacillus anthracis.</title>
        <authorList>
            <person name="Han C.S."/>
            <person name="Xie G."/>
            <person name="Challacombe J.F."/>
            <person name="Altherr M.R."/>
            <person name="Bhotika S.S."/>
            <person name="Bruce D."/>
            <person name="Campbell C.S."/>
            <person name="Campbell M.L."/>
            <person name="Chen J."/>
            <person name="Chertkov O."/>
            <person name="Cleland C."/>
            <person name="Dimitrijevic M."/>
            <person name="Doggett N.A."/>
            <person name="Fawcett J.J."/>
            <person name="Glavina T."/>
            <person name="Goodwin L.A."/>
            <person name="Hill K.K."/>
            <person name="Hitchcock P."/>
            <person name="Jackson P.J."/>
            <person name="Keim P."/>
            <person name="Kewalramani A.R."/>
            <person name="Longmire J."/>
            <person name="Lucas S."/>
            <person name="Malfatti S."/>
            <person name="McMurry K."/>
            <person name="Meincke L.J."/>
            <person name="Misra M."/>
            <person name="Moseman B.L."/>
            <person name="Mundt M."/>
            <person name="Munk A.C."/>
            <person name="Okinaka R.T."/>
            <person name="Parson-Quintana B."/>
            <person name="Reilly L.P."/>
            <person name="Richardson P."/>
            <person name="Robinson D.L."/>
            <person name="Rubin E."/>
            <person name="Saunders E."/>
            <person name="Tapia R."/>
            <person name="Tesmer J.G."/>
            <person name="Thayer N."/>
            <person name="Thompson L.S."/>
            <person name="Tice H."/>
            <person name="Ticknor L.O."/>
            <person name="Wills P.L."/>
            <person name="Brettin T.S."/>
            <person name="Gilna P."/>
        </authorList>
    </citation>
    <scope>NUCLEOTIDE SEQUENCE [LARGE SCALE GENOMIC DNA]</scope>
    <source>
        <strain>ZK / E33L</strain>
    </source>
</reference>
<feature type="chain" id="PRO_0000160472" description="ATP-dependent protease ATPase subunit HslU">
    <location>
        <begin position="1"/>
        <end position="463"/>
    </location>
</feature>
<feature type="binding site" evidence="1">
    <location>
        <position position="19"/>
    </location>
    <ligand>
        <name>ATP</name>
        <dbReference type="ChEBI" id="CHEBI:30616"/>
    </ligand>
</feature>
<feature type="binding site" evidence="1">
    <location>
        <begin position="61"/>
        <end position="66"/>
    </location>
    <ligand>
        <name>ATP</name>
        <dbReference type="ChEBI" id="CHEBI:30616"/>
    </ligand>
</feature>
<feature type="binding site" evidence="1">
    <location>
        <position position="277"/>
    </location>
    <ligand>
        <name>ATP</name>
        <dbReference type="ChEBI" id="CHEBI:30616"/>
    </ligand>
</feature>
<feature type="binding site" evidence="1">
    <location>
        <position position="341"/>
    </location>
    <ligand>
        <name>ATP</name>
        <dbReference type="ChEBI" id="CHEBI:30616"/>
    </ligand>
</feature>
<feature type="binding site" evidence="1">
    <location>
        <position position="413"/>
    </location>
    <ligand>
        <name>ATP</name>
        <dbReference type="ChEBI" id="CHEBI:30616"/>
    </ligand>
</feature>
<keyword id="KW-0067">ATP-binding</keyword>
<keyword id="KW-0143">Chaperone</keyword>
<keyword id="KW-0963">Cytoplasm</keyword>
<keyword id="KW-0547">Nucleotide-binding</keyword>
<dbReference type="EMBL" id="CP000001">
    <property type="protein sequence ID" value="AAU16677.1"/>
    <property type="molecule type" value="Genomic_DNA"/>
</dbReference>
<dbReference type="RefSeq" id="WP_000550088.1">
    <property type="nucleotide sequence ID" value="NZ_CP009968.1"/>
</dbReference>
<dbReference type="SMR" id="Q636J7"/>
<dbReference type="GeneID" id="45023657"/>
<dbReference type="KEGG" id="bcz:BCE33L3588"/>
<dbReference type="PATRIC" id="fig|288681.22.peg.1823"/>
<dbReference type="Proteomes" id="UP000002612">
    <property type="component" value="Chromosome"/>
</dbReference>
<dbReference type="GO" id="GO:0009376">
    <property type="term" value="C:HslUV protease complex"/>
    <property type="evidence" value="ECO:0007669"/>
    <property type="project" value="UniProtKB-UniRule"/>
</dbReference>
<dbReference type="GO" id="GO:0005524">
    <property type="term" value="F:ATP binding"/>
    <property type="evidence" value="ECO:0007669"/>
    <property type="project" value="UniProtKB-UniRule"/>
</dbReference>
<dbReference type="GO" id="GO:0016887">
    <property type="term" value="F:ATP hydrolysis activity"/>
    <property type="evidence" value="ECO:0007669"/>
    <property type="project" value="InterPro"/>
</dbReference>
<dbReference type="GO" id="GO:0008233">
    <property type="term" value="F:peptidase activity"/>
    <property type="evidence" value="ECO:0007669"/>
    <property type="project" value="InterPro"/>
</dbReference>
<dbReference type="GO" id="GO:0036402">
    <property type="term" value="F:proteasome-activating activity"/>
    <property type="evidence" value="ECO:0007669"/>
    <property type="project" value="UniProtKB-UniRule"/>
</dbReference>
<dbReference type="GO" id="GO:0043335">
    <property type="term" value="P:protein unfolding"/>
    <property type="evidence" value="ECO:0007669"/>
    <property type="project" value="UniProtKB-UniRule"/>
</dbReference>
<dbReference type="GO" id="GO:0051603">
    <property type="term" value="P:proteolysis involved in protein catabolic process"/>
    <property type="evidence" value="ECO:0007669"/>
    <property type="project" value="TreeGrafter"/>
</dbReference>
<dbReference type="CDD" id="cd19498">
    <property type="entry name" value="RecA-like_HslU"/>
    <property type="match status" value="1"/>
</dbReference>
<dbReference type="FunFam" id="3.40.50.300:FF:000220">
    <property type="entry name" value="ATP-dependent protease ATPase subunit HslU"/>
    <property type="match status" value="1"/>
</dbReference>
<dbReference type="Gene3D" id="1.10.8.60">
    <property type="match status" value="1"/>
</dbReference>
<dbReference type="Gene3D" id="1.10.8.10">
    <property type="entry name" value="DNA helicase RuvA subunit, C-terminal domain"/>
    <property type="match status" value="2"/>
</dbReference>
<dbReference type="Gene3D" id="3.40.50.300">
    <property type="entry name" value="P-loop containing nucleotide triphosphate hydrolases"/>
    <property type="match status" value="1"/>
</dbReference>
<dbReference type="HAMAP" id="MF_00249">
    <property type="entry name" value="HslU"/>
    <property type="match status" value="1"/>
</dbReference>
<dbReference type="InterPro" id="IPR003593">
    <property type="entry name" value="AAA+_ATPase"/>
</dbReference>
<dbReference type="InterPro" id="IPR050052">
    <property type="entry name" value="ATP-dep_Clp_protease_ClpX"/>
</dbReference>
<dbReference type="InterPro" id="IPR003959">
    <property type="entry name" value="ATPase_AAA_core"/>
</dbReference>
<dbReference type="InterPro" id="IPR019489">
    <property type="entry name" value="Clp_ATPase_C"/>
</dbReference>
<dbReference type="InterPro" id="IPR004491">
    <property type="entry name" value="HslU"/>
</dbReference>
<dbReference type="InterPro" id="IPR027417">
    <property type="entry name" value="P-loop_NTPase"/>
</dbReference>
<dbReference type="NCBIfam" id="TIGR00390">
    <property type="entry name" value="hslU"/>
    <property type="match status" value="1"/>
</dbReference>
<dbReference type="NCBIfam" id="NF003544">
    <property type="entry name" value="PRK05201.1"/>
    <property type="match status" value="1"/>
</dbReference>
<dbReference type="PANTHER" id="PTHR48102">
    <property type="entry name" value="ATP-DEPENDENT CLP PROTEASE ATP-BINDING SUBUNIT CLPX-LIKE, MITOCHONDRIAL-RELATED"/>
    <property type="match status" value="1"/>
</dbReference>
<dbReference type="PANTHER" id="PTHR48102:SF3">
    <property type="entry name" value="ATP-DEPENDENT PROTEASE ATPASE SUBUNIT HSLU"/>
    <property type="match status" value="1"/>
</dbReference>
<dbReference type="Pfam" id="PF00004">
    <property type="entry name" value="AAA"/>
    <property type="match status" value="1"/>
</dbReference>
<dbReference type="Pfam" id="PF07724">
    <property type="entry name" value="AAA_2"/>
    <property type="match status" value="1"/>
</dbReference>
<dbReference type="Pfam" id="PF10431">
    <property type="entry name" value="ClpB_D2-small"/>
    <property type="match status" value="1"/>
</dbReference>
<dbReference type="SMART" id="SM00382">
    <property type="entry name" value="AAA"/>
    <property type="match status" value="1"/>
</dbReference>
<dbReference type="SMART" id="SM01086">
    <property type="entry name" value="ClpB_D2-small"/>
    <property type="match status" value="1"/>
</dbReference>
<dbReference type="SUPFAM" id="SSF52540">
    <property type="entry name" value="P-loop containing nucleoside triphosphate hydrolases"/>
    <property type="match status" value="1"/>
</dbReference>
<sequence length="463" mass="52213">MHLHFTPRQIVEKLDQYIIGQKDAKKAVAVALRNRYRRSKLAENLRDEIAPKNILMIGPTGVGKTEVARRMAKLVGAPFIKVEATKFTEVGYVGRDVESMVRDLVETSVRIVKEEMVVKVQDKAEEQANQRLVEILVPSPEKQSGFKNPLEMLFGGTQNSNQTTDSQEDVEIEKKRQDVERKLAAGLLEDEIVSIEVTEQQSSMFDMLQGTGMEQMGMNFQDALGSFMPKKTKKRKLSVKEARKVLTNEEAQRLIDMDEVTQEAVYRAEQLGIIFIDEIDKIAGKQSNSVDVSREGVQRDILPIVEGSNVATKYGSVKTDYILFVAAGAFHMSKPSDLIPELQGRFPIRVELTKLSTDDFVKILIEPDNALIKQYMALLATEGIEIEFSDEAIRKIAEIAYQVNQDTDNIGARRLHTIMEKLLEDLSFEASEITLEKITITPQYVEEKLATIAKNKDVSQFIL</sequence>
<accession>Q636J7</accession>
<proteinExistence type="inferred from homology"/>
<comment type="function">
    <text evidence="1">ATPase subunit of a proteasome-like degradation complex; this subunit has chaperone activity. The binding of ATP and its subsequent hydrolysis by HslU are essential for unfolding of protein substrates subsequently hydrolyzed by HslV. HslU recognizes the N-terminal part of its protein substrates and unfolds these before they are guided to HslV for hydrolysis.</text>
</comment>
<comment type="subunit">
    <text evidence="1">A double ring-shaped homohexamer of HslV is capped on each side by a ring-shaped HslU homohexamer. The assembly of the HslU/HslV complex is dependent on binding of ATP.</text>
</comment>
<comment type="subcellular location">
    <subcellularLocation>
        <location evidence="1">Cytoplasm</location>
    </subcellularLocation>
</comment>
<comment type="similarity">
    <text evidence="1">Belongs to the ClpX chaperone family. HslU subfamily.</text>
</comment>
<organism>
    <name type="scientific">Bacillus cereus (strain ZK / E33L)</name>
    <dbReference type="NCBI Taxonomy" id="288681"/>
    <lineage>
        <taxon>Bacteria</taxon>
        <taxon>Bacillati</taxon>
        <taxon>Bacillota</taxon>
        <taxon>Bacilli</taxon>
        <taxon>Bacillales</taxon>
        <taxon>Bacillaceae</taxon>
        <taxon>Bacillus</taxon>
        <taxon>Bacillus cereus group</taxon>
    </lineage>
</organism>
<gene>
    <name evidence="1" type="primary">hslU</name>
    <name type="ordered locus">BCE33L3588</name>
</gene>
<name>HSLU_BACCZ</name>